<name>CYB_CRAGY</name>
<reference key="1">
    <citation type="journal article" date="1993" name="Mol. Phylogenet. Evol.">
        <title>Phylogenetic relationships of pocket gophers (Cratogeomys and Pappogeomys) based on mitochondrial DNA cytochrome b sequences.</title>
        <authorList>
            <person name="Dewalt T.S."/>
            <person name="Sudman P.D."/>
            <person name="Hafner M.S."/>
            <person name="Davis S.K."/>
        </authorList>
    </citation>
    <scope>NUCLEOTIDE SEQUENCE [GENOMIC DNA]</scope>
</reference>
<feature type="chain" id="PRO_0000060819" description="Cytochrome b">
    <location>
        <begin position="1"/>
        <end position="379"/>
    </location>
</feature>
<feature type="transmembrane region" description="Helical" evidence="2">
    <location>
        <begin position="33"/>
        <end position="53"/>
    </location>
</feature>
<feature type="transmembrane region" description="Helical" evidence="2">
    <location>
        <begin position="77"/>
        <end position="98"/>
    </location>
</feature>
<feature type="transmembrane region" description="Helical" evidence="2">
    <location>
        <begin position="113"/>
        <end position="133"/>
    </location>
</feature>
<feature type="transmembrane region" description="Helical" evidence="2">
    <location>
        <begin position="178"/>
        <end position="198"/>
    </location>
</feature>
<feature type="transmembrane region" description="Helical" evidence="2">
    <location>
        <begin position="226"/>
        <end position="246"/>
    </location>
</feature>
<feature type="transmembrane region" description="Helical" evidence="2">
    <location>
        <begin position="288"/>
        <end position="308"/>
    </location>
</feature>
<feature type="transmembrane region" description="Helical" evidence="2">
    <location>
        <begin position="320"/>
        <end position="340"/>
    </location>
</feature>
<feature type="transmembrane region" description="Helical" evidence="2">
    <location>
        <begin position="347"/>
        <end position="367"/>
    </location>
</feature>
<feature type="binding site" description="axial binding residue" evidence="2">
    <location>
        <position position="83"/>
    </location>
    <ligand>
        <name>heme b</name>
        <dbReference type="ChEBI" id="CHEBI:60344"/>
        <label>b562</label>
    </ligand>
    <ligandPart>
        <name>Fe</name>
        <dbReference type="ChEBI" id="CHEBI:18248"/>
    </ligandPart>
</feature>
<feature type="binding site" description="axial binding residue" evidence="2">
    <location>
        <position position="97"/>
    </location>
    <ligand>
        <name>heme b</name>
        <dbReference type="ChEBI" id="CHEBI:60344"/>
        <label>b566</label>
    </ligand>
    <ligandPart>
        <name>Fe</name>
        <dbReference type="ChEBI" id="CHEBI:18248"/>
    </ligandPart>
</feature>
<feature type="binding site" description="axial binding residue" evidence="2">
    <location>
        <position position="182"/>
    </location>
    <ligand>
        <name>heme b</name>
        <dbReference type="ChEBI" id="CHEBI:60344"/>
        <label>b562</label>
    </ligand>
    <ligandPart>
        <name>Fe</name>
        <dbReference type="ChEBI" id="CHEBI:18248"/>
    </ligandPart>
</feature>
<feature type="binding site" description="axial binding residue" evidence="2">
    <location>
        <position position="196"/>
    </location>
    <ligand>
        <name>heme b</name>
        <dbReference type="ChEBI" id="CHEBI:60344"/>
        <label>b566</label>
    </ligand>
    <ligandPart>
        <name>Fe</name>
        <dbReference type="ChEBI" id="CHEBI:18248"/>
    </ligandPart>
</feature>
<feature type="binding site" evidence="2">
    <location>
        <position position="201"/>
    </location>
    <ligand>
        <name>a ubiquinone</name>
        <dbReference type="ChEBI" id="CHEBI:16389"/>
    </ligand>
</feature>
<organism>
    <name type="scientific">Cratogeomys gymnurus</name>
    <name type="common">Llano pocket gopher</name>
    <name type="synonym">Pappogeomys gymnurus</name>
    <dbReference type="NCBI Taxonomy" id="13461"/>
    <lineage>
        <taxon>Eukaryota</taxon>
        <taxon>Metazoa</taxon>
        <taxon>Chordata</taxon>
        <taxon>Craniata</taxon>
        <taxon>Vertebrata</taxon>
        <taxon>Euteleostomi</taxon>
        <taxon>Mammalia</taxon>
        <taxon>Eutheria</taxon>
        <taxon>Euarchontoglires</taxon>
        <taxon>Glires</taxon>
        <taxon>Rodentia</taxon>
        <taxon>Castorimorpha</taxon>
        <taxon>Geomyidae</taxon>
        <taxon>Cratogeomys</taxon>
    </lineage>
</organism>
<accession>Q34107</accession>
<sequence length="379" mass="42851">MTIMRKSHPLMKIVNHAFIDLPTPPNISGWWNFGSLLGLCLILQILTGLFLAMHYTSDTTTAFSSVTHICRDVNYGWLIRYMHANGASLFFICLYIHIGRGIYYGSYLYTETWNIGILLLFLTMATAFVGYVLPWGQMSFWGATVITNLLSAIPYIGQDLVEWIWGGFSVDKATLTRFFAFHFILPFIIMALAMVHLLFLHETGSNNPLGIPSNCGKVPFHPYYTTKDFLGAILLLTLFMTLVLFFPDKLGDPDNYTPANPLNTPPHIKPEWYFLFAYAILRSIPNKLGGVCALVFSILVLALLPYLHTSKQRSLSFRPLSQTLFWTLVSDLIILTWIGGQPVESPYIIIGQVASILYFSIILILMPIAGLIENKMLKW</sequence>
<dbReference type="EMBL" id="L11905">
    <property type="protein sequence ID" value="AAB00974.1"/>
    <property type="molecule type" value="Genomic_DNA"/>
</dbReference>
<dbReference type="SMR" id="Q34107"/>
<dbReference type="GO" id="GO:0005743">
    <property type="term" value="C:mitochondrial inner membrane"/>
    <property type="evidence" value="ECO:0007669"/>
    <property type="project" value="UniProtKB-SubCell"/>
</dbReference>
<dbReference type="GO" id="GO:0045275">
    <property type="term" value="C:respiratory chain complex III"/>
    <property type="evidence" value="ECO:0007669"/>
    <property type="project" value="InterPro"/>
</dbReference>
<dbReference type="GO" id="GO:0046872">
    <property type="term" value="F:metal ion binding"/>
    <property type="evidence" value="ECO:0007669"/>
    <property type="project" value="UniProtKB-KW"/>
</dbReference>
<dbReference type="GO" id="GO:0008121">
    <property type="term" value="F:ubiquinol-cytochrome-c reductase activity"/>
    <property type="evidence" value="ECO:0007669"/>
    <property type="project" value="InterPro"/>
</dbReference>
<dbReference type="GO" id="GO:0006122">
    <property type="term" value="P:mitochondrial electron transport, ubiquinol to cytochrome c"/>
    <property type="evidence" value="ECO:0007669"/>
    <property type="project" value="TreeGrafter"/>
</dbReference>
<dbReference type="CDD" id="cd00290">
    <property type="entry name" value="cytochrome_b_C"/>
    <property type="match status" value="1"/>
</dbReference>
<dbReference type="CDD" id="cd00284">
    <property type="entry name" value="Cytochrome_b_N"/>
    <property type="match status" value="1"/>
</dbReference>
<dbReference type="FunFam" id="1.20.810.10:FF:000002">
    <property type="entry name" value="Cytochrome b"/>
    <property type="match status" value="1"/>
</dbReference>
<dbReference type="Gene3D" id="1.20.810.10">
    <property type="entry name" value="Cytochrome Bc1 Complex, Chain C"/>
    <property type="match status" value="1"/>
</dbReference>
<dbReference type="InterPro" id="IPR005798">
    <property type="entry name" value="Cyt_b/b6_C"/>
</dbReference>
<dbReference type="InterPro" id="IPR036150">
    <property type="entry name" value="Cyt_b/b6_C_sf"/>
</dbReference>
<dbReference type="InterPro" id="IPR005797">
    <property type="entry name" value="Cyt_b/b6_N"/>
</dbReference>
<dbReference type="InterPro" id="IPR027387">
    <property type="entry name" value="Cytb/b6-like_sf"/>
</dbReference>
<dbReference type="InterPro" id="IPR030689">
    <property type="entry name" value="Cytochrome_b"/>
</dbReference>
<dbReference type="InterPro" id="IPR048260">
    <property type="entry name" value="Cytochrome_b_C_euk/bac"/>
</dbReference>
<dbReference type="InterPro" id="IPR048259">
    <property type="entry name" value="Cytochrome_b_N_euk/bac"/>
</dbReference>
<dbReference type="InterPro" id="IPR016174">
    <property type="entry name" value="Di-haem_cyt_TM"/>
</dbReference>
<dbReference type="PANTHER" id="PTHR19271">
    <property type="entry name" value="CYTOCHROME B"/>
    <property type="match status" value="1"/>
</dbReference>
<dbReference type="PANTHER" id="PTHR19271:SF16">
    <property type="entry name" value="CYTOCHROME B"/>
    <property type="match status" value="1"/>
</dbReference>
<dbReference type="Pfam" id="PF00032">
    <property type="entry name" value="Cytochrom_B_C"/>
    <property type="match status" value="1"/>
</dbReference>
<dbReference type="Pfam" id="PF00033">
    <property type="entry name" value="Cytochrome_B"/>
    <property type="match status" value="1"/>
</dbReference>
<dbReference type="PIRSF" id="PIRSF038885">
    <property type="entry name" value="COB"/>
    <property type="match status" value="1"/>
</dbReference>
<dbReference type="SUPFAM" id="SSF81648">
    <property type="entry name" value="a domain/subunit of cytochrome bc1 complex (Ubiquinol-cytochrome c reductase)"/>
    <property type="match status" value="1"/>
</dbReference>
<dbReference type="SUPFAM" id="SSF81342">
    <property type="entry name" value="Transmembrane di-heme cytochromes"/>
    <property type="match status" value="1"/>
</dbReference>
<dbReference type="PROSITE" id="PS51003">
    <property type="entry name" value="CYTB_CTER"/>
    <property type="match status" value="1"/>
</dbReference>
<dbReference type="PROSITE" id="PS51002">
    <property type="entry name" value="CYTB_NTER"/>
    <property type="match status" value="1"/>
</dbReference>
<protein>
    <recommendedName>
        <fullName>Cytochrome b</fullName>
    </recommendedName>
    <alternativeName>
        <fullName>Complex III subunit 3</fullName>
    </alternativeName>
    <alternativeName>
        <fullName>Complex III subunit III</fullName>
    </alternativeName>
    <alternativeName>
        <fullName>Cytochrome b-c1 complex subunit 3</fullName>
    </alternativeName>
    <alternativeName>
        <fullName>Ubiquinol-cytochrome-c reductase complex cytochrome b subunit</fullName>
    </alternativeName>
</protein>
<comment type="function">
    <text evidence="2">Component of the ubiquinol-cytochrome c reductase complex (complex III or cytochrome b-c1 complex) that is part of the mitochondrial respiratory chain. The b-c1 complex mediates electron transfer from ubiquinol to cytochrome c. Contributes to the generation of a proton gradient across the mitochondrial membrane that is then used for ATP synthesis.</text>
</comment>
<comment type="cofactor">
    <cofactor evidence="2">
        <name>heme b</name>
        <dbReference type="ChEBI" id="CHEBI:60344"/>
    </cofactor>
    <text evidence="2">Binds 2 heme b groups non-covalently.</text>
</comment>
<comment type="subunit">
    <text evidence="2">The cytochrome bc1 complex contains 11 subunits: 3 respiratory subunits (MT-CYB, CYC1 and UQCRFS1), 2 core proteins (UQCRC1 and UQCRC2) and 6 low-molecular weight proteins (UQCRH/QCR6, UQCRB/QCR7, UQCRQ/QCR8, UQCR10/QCR9, UQCR11/QCR10 and a cleavage product of UQCRFS1). This cytochrome bc1 complex then forms a dimer.</text>
</comment>
<comment type="subcellular location">
    <subcellularLocation>
        <location evidence="2">Mitochondrion inner membrane</location>
        <topology evidence="2">Multi-pass membrane protein</topology>
    </subcellularLocation>
</comment>
<comment type="miscellaneous">
    <text evidence="1">Heme 1 (or BL or b562) is low-potential and absorbs at about 562 nm, and heme 2 (or BH or b566) is high-potential and absorbs at about 566 nm.</text>
</comment>
<comment type="similarity">
    <text evidence="3 4">Belongs to the cytochrome b family.</text>
</comment>
<comment type="caution">
    <text evidence="2">The full-length protein contains only eight transmembrane helices, not nine as predicted by bioinformatics tools.</text>
</comment>
<proteinExistence type="inferred from homology"/>
<evidence type="ECO:0000250" key="1"/>
<evidence type="ECO:0000250" key="2">
    <source>
        <dbReference type="UniProtKB" id="P00157"/>
    </source>
</evidence>
<evidence type="ECO:0000255" key="3">
    <source>
        <dbReference type="PROSITE-ProRule" id="PRU00967"/>
    </source>
</evidence>
<evidence type="ECO:0000255" key="4">
    <source>
        <dbReference type="PROSITE-ProRule" id="PRU00968"/>
    </source>
</evidence>
<keyword id="KW-0249">Electron transport</keyword>
<keyword id="KW-0349">Heme</keyword>
<keyword id="KW-0408">Iron</keyword>
<keyword id="KW-0472">Membrane</keyword>
<keyword id="KW-0479">Metal-binding</keyword>
<keyword id="KW-0496">Mitochondrion</keyword>
<keyword id="KW-0999">Mitochondrion inner membrane</keyword>
<keyword id="KW-0679">Respiratory chain</keyword>
<keyword id="KW-0812">Transmembrane</keyword>
<keyword id="KW-1133">Transmembrane helix</keyword>
<keyword id="KW-0813">Transport</keyword>
<keyword id="KW-0830">Ubiquinone</keyword>
<gene>
    <name type="primary">MT-CYB</name>
    <name type="synonym">COB</name>
    <name type="synonym">CYTB</name>
    <name type="synonym">MTCYB</name>
</gene>
<geneLocation type="mitochondrion"/>